<keyword id="KW-0066">ATP synthesis</keyword>
<keyword id="KW-1003">Cell membrane</keyword>
<keyword id="KW-0139">CF(1)</keyword>
<keyword id="KW-0375">Hydrogen ion transport</keyword>
<keyword id="KW-0406">Ion transport</keyword>
<keyword id="KW-0472">Membrane</keyword>
<keyword id="KW-1185">Reference proteome</keyword>
<keyword id="KW-0813">Transport</keyword>
<feature type="chain" id="PRO_1000146336" description="ATP synthase epsilon chain">
    <location>
        <begin position="1"/>
        <end position="136"/>
    </location>
</feature>
<accession>B9E8E5</accession>
<organism>
    <name type="scientific">Macrococcus caseolyticus (strain JCSC5402)</name>
    <name type="common">Macrococcoides caseolyticum</name>
    <dbReference type="NCBI Taxonomy" id="458233"/>
    <lineage>
        <taxon>Bacteria</taxon>
        <taxon>Bacillati</taxon>
        <taxon>Bacillota</taxon>
        <taxon>Bacilli</taxon>
        <taxon>Bacillales</taxon>
        <taxon>Staphylococcaceae</taxon>
        <taxon>Macrococcoides</taxon>
    </lineage>
</organism>
<protein>
    <recommendedName>
        <fullName evidence="1">ATP synthase epsilon chain</fullName>
    </recommendedName>
    <alternativeName>
        <fullName evidence="1">ATP synthase F1 sector epsilon subunit</fullName>
    </alternativeName>
    <alternativeName>
        <fullName evidence="1">F-ATPase epsilon subunit</fullName>
    </alternativeName>
</protein>
<sequence>MNKLAIEIVTPNGSIYSETEAELIVLQTESGEMGVMAGHIPTVAPLKIGAVRVTKPGNDKDYIAVTEGFAEIRPQQVSVLVQAAEQAEGIDIERAKESLKRAEARLNEDKAAHVDFHRAERALHRAINRIEVAKFR</sequence>
<reference key="1">
    <citation type="journal article" date="2009" name="J. Bacteriol.">
        <title>Complete genome sequence of Macrococcus caseolyticus strain JCSCS5402, reflecting the ancestral genome of the human-pathogenic staphylococci.</title>
        <authorList>
            <person name="Baba T."/>
            <person name="Kuwahara-Arai K."/>
            <person name="Uchiyama I."/>
            <person name="Takeuchi F."/>
            <person name="Ito T."/>
            <person name="Hiramatsu K."/>
        </authorList>
    </citation>
    <scope>NUCLEOTIDE SEQUENCE [LARGE SCALE GENOMIC DNA]</scope>
    <source>
        <strain>JCSC5402</strain>
    </source>
</reference>
<proteinExistence type="inferred from homology"/>
<gene>
    <name evidence="1" type="primary">atpC</name>
    <name type="ordered locus">MCCL_1756</name>
</gene>
<comment type="function">
    <text evidence="1">Produces ATP from ADP in the presence of a proton gradient across the membrane.</text>
</comment>
<comment type="subunit">
    <text evidence="1">F-type ATPases have 2 components, CF(1) - the catalytic core - and CF(0) - the membrane proton channel. CF(1) has five subunits: alpha(3), beta(3), gamma(1), delta(1), epsilon(1). CF(0) has three main subunits: a, b and c.</text>
</comment>
<comment type="subcellular location">
    <subcellularLocation>
        <location evidence="1">Cell membrane</location>
        <topology evidence="1">Peripheral membrane protein</topology>
    </subcellularLocation>
</comment>
<comment type="similarity">
    <text evidence="1">Belongs to the ATPase epsilon chain family.</text>
</comment>
<evidence type="ECO:0000255" key="1">
    <source>
        <dbReference type="HAMAP-Rule" id="MF_00530"/>
    </source>
</evidence>
<name>ATPE_MACCJ</name>
<dbReference type="EMBL" id="AP009484">
    <property type="protein sequence ID" value="BAH18463.1"/>
    <property type="molecule type" value="Genomic_DNA"/>
</dbReference>
<dbReference type="RefSeq" id="WP_015912255.1">
    <property type="nucleotide sequence ID" value="NC_011999.1"/>
</dbReference>
<dbReference type="SMR" id="B9E8E5"/>
<dbReference type="STRING" id="458233.MCCL_1756"/>
<dbReference type="GeneID" id="61130135"/>
<dbReference type="KEGG" id="mcl:MCCL_1756"/>
<dbReference type="eggNOG" id="COG0355">
    <property type="taxonomic scope" value="Bacteria"/>
</dbReference>
<dbReference type="HOGENOM" id="CLU_084338_1_0_9"/>
<dbReference type="OrthoDB" id="9804110at2"/>
<dbReference type="Proteomes" id="UP000001383">
    <property type="component" value="Chromosome"/>
</dbReference>
<dbReference type="GO" id="GO:0005886">
    <property type="term" value="C:plasma membrane"/>
    <property type="evidence" value="ECO:0007669"/>
    <property type="project" value="UniProtKB-SubCell"/>
</dbReference>
<dbReference type="GO" id="GO:0045259">
    <property type="term" value="C:proton-transporting ATP synthase complex"/>
    <property type="evidence" value="ECO:0007669"/>
    <property type="project" value="UniProtKB-KW"/>
</dbReference>
<dbReference type="GO" id="GO:0005524">
    <property type="term" value="F:ATP binding"/>
    <property type="evidence" value="ECO:0007669"/>
    <property type="project" value="UniProtKB-UniRule"/>
</dbReference>
<dbReference type="GO" id="GO:0046933">
    <property type="term" value="F:proton-transporting ATP synthase activity, rotational mechanism"/>
    <property type="evidence" value="ECO:0007669"/>
    <property type="project" value="UniProtKB-UniRule"/>
</dbReference>
<dbReference type="CDD" id="cd12152">
    <property type="entry name" value="F1-ATPase_delta"/>
    <property type="match status" value="1"/>
</dbReference>
<dbReference type="FunFam" id="1.20.5.440:FF:000001">
    <property type="entry name" value="ATP synthase epsilon chain"/>
    <property type="match status" value="1"/>
</dbReference>
<dbReference type="Gene3D" id="1.20.5.440">
    <property type="entry name" value="ATP synthase delta/epsilon subunit, C-terminal domain"/>
    <property type="match status" value="1"/>
</dbReference>
<dbReference type="Gene3D" id="2.60.15.10">
    <property type="entry name" value="F0F1 ATP synthase delta/epsilon subunit, N-terminal"/>
    <property type="match status" value="1"/>
</dbReference>
<dbReference type="HAMAP" id="MF_00530">
    <property type="entry name" value="ATP_synth_epsil_bac"/>
    <property type="match status" value="1"/>
</dbReference>
<dbReference type="InterPro" id="IPR036794">
    <property type="entry name" value="ATP_F1_dsu/esu_C_sf"/>
</dbReference>
<dbReference type="InterPro" id="IPR001469">
    <property type="entry name" value="ATP_synth_F1_dsu/esu"/>
</dbReference>
<dbReference type="InterPro" id="IPR020546">
    <property type="entry name" value="ATP_synth_F1_dsu/esu_N"/>
</dbReference>
<dbReference type="InterPro" id="IPR020547">
    <property type="entry name" value="ATP_synth_F1_esu_C"/>
</dbReference>
<dbReference type="InterPro" id="IPR036771">
    <property type="entry name" value="ATPsynth_dsu/esu_N"/>
</dbReference>
<dbReference type="NCBIfam" id="TIGR01216">
    <property type="entry name" value="ATP_synt_epsi"/>
    <property type="match status" value="1"/>
</dbReference>
<dbReference type="NCBIfam" id="NF001846">
    <property type="entry name" value="PRK00571.1-3"/>
    <property type="match status" value="1"/>
</dbReference>
<dbReference type="PANTHER" id="PTHR13822">
    <property type="entry name" value="ATP SYNTHASE DELTA/EPSILON CHAIN"/>
    <property type="match status" value="1"/>
</dbReference>
<dbReference type="PANTHER" id="PTHR13822:SF10">
    <property type="entry name" value="ATP SYNTHASE EPSILON CHAIN, CHLOROPLASTIC"/>
    <property type="match status" value="1"/>
</dbReference>
<dbReference type="Pfam" id="PF00401">
    <property type="entry name" value="ATP-synt_DE"/>
    <property type="match status" value="1"/>
</dbReference>
<dbReference type="Pfam" id="PF02823">
    <property type="entry name" value="ATP-synt_DE_N"/>
    <property type="match status" value="1"/>
</dbReference>
<dbReference type="SUPFAM" id="SSF46604">
    <property type="entry name" value="Epsilon subunit of F1F0-ATP synthase C-terminal domain"/>
    <property type="match status" value="1"/>
</dbReference>
<dbReference type="SUPFAM" id="SSF51344">
    <property type="entry name" value="Epsilon subunit of F1F0-ATP synthase N-terminal domain"/>
    <property type="match status" value="1"/>
</dbReference>